<reference key="1">
    <citation type="journal article" date="2001" name="Proc. Natl. Acad. Sci. U.S.A.">
        <title>Complete genomic sequence of Pasteurella multocida Pm70.</title>
        <authorList>
            <person name="May B.J."/>
            <person name="Zhang Q."/>
            <person name="Li L.L."/>
            <person name="Paustian M.L."/>
            <person name="Whittam T.S."/>
            <person name="Kapur V."/>
        </authorList>
    </citation>
    <scope>NUCLEOTIDE SEQUENCE [LARGE SCALE GENOMIC DNA]</scope>
    <source>
        <strain>Pm70</strain>
    </source>
</reference>
<sequence>MFQYSAEFKQAKVLVLGDVMLDRYWFGATNRISPEAPVPVVRVQDNEERAGGAANVAMNIAALNVPVKLLGLTGRDETGLALESLLAKSRIECDFVQLHTHPTITKLRILSRHQQLLRLDFEEDFQNVTSDALLQKLDSALQNYGALVLSDYGKGTLNQVQKMIQLARQANIPVLIDPKGTDFERYRGATLLTPNMSEFEAVVGKCDSEEEIIEKGLKLIEQIDLSALLVTRSEKGMTLLRPNQPAFHLATEAKEVFDVTGAGDTVISVLATGLADGRSFEEACYLANVAAGIVVGKLGTSTVSTVELENAIHGRSNTGFGIMSEAELKRVVAQAKARGEKIVMTNGCFDILHPGHVSYLENARKLGDRLIVAVNSDDSVKRLKGETRPINDLQSRMAVLAGLSSVDWLVAFHEDTPQRLIAEVLPDLLVKGGDYKPEDIAGSQEVWASGGDVKVLNFENGCSTSNVISKIQQLKD</sequence>
<name>HLDE_PASMU</name>
<protein>
    <recommendedName>
        <fullName evidence="1">Bifunctional protein HldE</fullName>
    </recommendedName>
    <domain>
        <recommendedName>
            <fullName evidence="1">D-beta-D-heptose 7-phosphate kinase</fullName>
            <ecNumber evidence="1">2.7.1.167</ecNumber>
        </recommendedName>
        <alternativeName>
            <fullName evidence="1">D-beta-D-heptose 7-phosphotransferase</fullName>
        </alternativeName>
        <alternativeName>
            <fullName evidence="1">D-glycero-beta-D-manno-heptose-7-phosphate kinase</fullName>
        </alternativeName>
    </domain>
    <domain>
        <recommendedName>
            <fullName evidence="1">D-beta-D-heptose 1-phosphate adenylyltransferase</fullName>
            <ecNumber evidence="1">2.7.7.70</ecNumber>
        </recommendedName>
        <alternativeName>
            <fullName evidence="1">D-glycero-beta-D-manno-heptose 1-phosphate adenylyltransferase</fullName>
        </alternativeName>
    </domain>
</protein>
<evidence type="ECO:0000255" key="1">
    <source>
        <dbReference type="HAMAP-Rule" id="MF_01603"/>
    </source>
</evidence>
<keyword id="KW-0067">ATP-binding</keyword>
<keyword id="KW-0119">Carbohydrate metabolism</keyword>
<keyword id="KW-0418">Kinase</keyword>
<keyword id="KW-0448">Lipopolysaccharide biosynthesis</keyword>
<keyword id="KW-0511">Multifunctional enzyme</keyword>
<keyword id="KW-0547">Nucleotide-binding</keyword>
<keyword id="KW-0548">Nucleotidyltransferase</keyword>
<keyword id="KW-1185">Reference proteome</keyword>
<keyword id="KW-0808">Transferase</keyword>
<organism>
    <name type="scientific">Pasteurella multocida (strain Pm70)</name>
    <dbReference type="NCBI Taxonomy" id="272843"/>
    <lineage>
        <taxon>Bacteria</taxon>
        <taxon>Pseudomonadati</taxon>
        <taxon>Pseudomonadota</taxon>
        <taxon>Gammaproteobacteria</taxon>
        <taxon>Pasteurellales</taxon>
        <taxon>Pasteurellaceae</taxon>
        <taxon>Pasteurella</taxon>
    </lineage>
</organism>
<proteinExistence type="inferred from homology"/>
<gene>
    <name evidence="1" type="primary">hldE</name>
    <name type="synonym">rfaE</name>
    <name type="ordered locus">PM0884</name>
</gene>
<comment type="function">
    <text evidence="1">Catalyzes the phosphorylation of D-glycero-D-manno-heptose 7-phosphate at the C-1 position to selectively form D-glycero-beta-D-manno-heptose-1,7-bisphosphate.</text>
</comment>
<comment type="function">
    <text evidence="1">Catalyzes the ADP transfer from ATP to D-glycero-beta-D-manno-heptose 1-phosphate, yielding ADP-D-glycero-beta-D-manno-heptose.</text>
</comment>
<comment type="catalytic activity">
    <reaction evidence="1">
        <text>D-glycero-beta-D-manno-heptose 7-phosphate + ATP = D-glycero-beta-D-manno-heptose 1,7-bisphosphate + ADP + H(+)</text>
        <dbReference type="Rhea" id="RHEA:27473"/>
        <dbReference type="ChEBI" id="CHEBI:15378"/>
        <dbReference type="ChEBI" id="CHEBI:30616"/>
        <dbReference type="ChEBI" id="CHEBI:60204"/>
        <dbReference type="ChEBI" id="CHEBI:60208"/>
        <dbReference type="ChEBI" id="CHEBI:456216"/>
        <dbReference type="EC" id="2.7.1.167"/>
    </reaction>
</comment>
<comment type="catalytic activity">
    <reaction evidence="1">
        <text>D-glycero-beta-D-manno-heptose 1-phosphate + ATP + H(+) = ADP-D-glycero-beta-D-manno-heptose + diphosphate</text>
        <dbReference type="Rhea" id="RHEA:27465"/>
        <dbReference type="ChEBI" id="CHEBI:15378"/>
        <dbReference type="ChEBI" id="CHEBI:30616"/>
        <dbReference type="ChEBI" id="CHEBI:33019"/>
        <dbReference type="ChEBI" id="CHEBI:59967"/>
        <dbReference type="ChEBI" id="CHEBI:61593"/>
        <dbReference type="EC" id="2.7.7.70"/>
    </reaction>
</comment>
<comment type="pathway">
    <text evidence="1">Nucleotide-sugar biosynthesis; ADP-L-glycero-beta-D-manno-heptose biosynthesis; ADP-L-glycero-beta-D-manno-heptose from D-glycero-beta-D-manno-heptose 7-phosphate: step 1/4.</text>
</comment>
<comment type="pathway">
    <text evidence="1">Nucleotide-sugar biosynthesis; ADP-L-glycero-beta-D-manno-heptose biosynthesis; ADP-L-glycero-beta-D-manno-heptose from D-glycero-beta-D-manno-heptose 7-phosphate: step 3/4.</text>
</comment>
<comment type="pathway">
    <text>Bacterial outer membrane biogenesis; LPS core biosynthesis.</text>
</comment>
<comment type="subunit">
    <text evidence="1">Homodimer.</text>
</comment>
<comment type="similarity">
    <text evidence="1">In the N-terminal section; belongs to the carbohydrate kinase PfkB family.</text>
</comment>
<comment type="similarity">
    <text evidence="1">In the C-terminal section; belongs to the cytidylyltransferase family.</text>
</comment>
<feature type="chain" id="PRO_0000080116" description="Bifunctional protein HldE">
    <location>
        <begin position="1"/>
        <end position="476"/>
    </location>
</feature>
<feature type="region of interest" description="Ribokinase">
    <location>
        <begin position="1"/>
        <end position="318"/>
    </location>
</feature>
<feature type="region of interest" description="Cytidylyltransferase">
    <location>
        <begin position="344"/>
        <end position="476"/>
    </location>
</feature>
<feature type="active site" evidence="1">
    <location>
        <position position="264"/>
    </location>
</feature>
<feature type="binding site" evidence="1">
    <location>
        <begin position="195"/>
        <end position="198"/>
    </location>
    <ligand>
        <name>ATP</name>
        <dbReference type="ChEBI" id="CHEBI:30616"/>
    </ligand>
</feature>
<dbReference type="EC" id="2.7.1.167" evidence="1"/>
<dbReference type="EC" id="2.7.7.70" evidence="1"/>
<dbReference type="EMBL" id="AE004439">
    <property type="protein sequence ID" value="AAK02968.1"/>
    <property type="molecule type" value="Genomic_DNA"/>
</dbReference>
<dbReference type="RefSeq" id="WP_005751650.1">
    <property type="nucleotide sequence ID" value="NC_002663.1"/>
</dbReference>
<dbReference type="SMR" id="Q9CME6"/>
<dbReference type="STRING" id="272843.PM0884"/>
<dbReference type="EnsemblBacteria" id="AAK02968">
    <property type="protein sequence ID" value="AAK02968"/>
    <property type="gene ID" value="PM0884"/>
</dbReference>
<dbReference type="KEGG" id="pmu:PM0884"/>
<dbReference type="HOGENOM" id="CLU_021150_2_1_6"/>
<dbReference type="OrthoDB" id="9802794at2"/>
<dbReference type="UniPathway" id="UPA00356">
    <property type="reaction ID" value="UER00437"/>
</dbReference>
<dbReference type="UniPathway" id="UPA00356">
    <property type="reaction ID" value="UER00439"/>
</dbReference>
<dbReference type="UniPathway" id="UPA00958"/>
<dbReference type="Proteomes" id="UP000000809">
    <property type="component" value="Chromosome"/>
</dbReference>
<dbReference type="GO" id="GO:0005829">
    <property type="term" value="C:cytosol"/>
    <property type="evidence" value="ECO:0007669"/>
    <property type="project" value="TreeGrafter"/>
</dbReference>
<dbReference type="GO" id="GO:0005524">
    <property type="term" value="F:ATP binding"/>
    <property type="evidence" value="ECO:0007669"/>
    <property type="project" value="UniProtKB-UniRule"/>
</dbReference>
<dbReference type="GO" id="GO:0033785">
    <property type="term" value="F:heptose 7-phosphate kinase activity"/>
    <property type="evidence" value="ECO:0007669"/>
    <property type="project" value="UniProtKB-UniRule"/>
</dbReference>
<dbReference type="GO" id="GO:0033786">
    <property type="term" value="F:heptose-1-phosphate adenylyltransferase activity"/>
    <property type="evidence" value="ECO:0007669"/>
    <property type="project" value="UniProtKB-UniRule"/>
</dbReference>
<dbReference type="GO" id="GO:0016773">
    <property type="term" value="F:phosphotransferase activity, alcohol group as acceptor"/>
    <property type="evidence" value="ECO:0007669"/>
    <property type="project" value="InterPro"/>
</dbReference>
<dbReference type="GO" id="GO:0097171">
    <property type="term" value="P:ADP-L-glycero-beta-D-manno-heptose biosynthetic process"/>
    <property type="evidence" value="ECO:0007669"/>
    <property type="project" value="UniProtKB-UniPathway"/>
</dbReference>
<dbReference type="GO" id="GO:0009244">
    <property type="term" value="P:lipopolysaccharide core region biosynthetic process"/>
    <property type="evidence" value="ECO:0007669"/>
    <property type="project" value="UniProtKB-UniPathway"/>
</dbReference>
<dbReference type="CDD" id="cd01172">
    <property type="entry name" value="RfaE_like"/>
    <property type="match status" value="1"/>
</dbReference>
<dbReference type="FunFam" id="3.40.1190.20:FF:000002">
    <property type="entry name" value="Bifunctional protein HldE"/>
    <property type="match status" value="1"/>
</dbReference>
<dbReference type="FunFam" id="3.40.50.620:FF:000028">
    <property type="entry name" value="Bifunctional protein HldE"/>
    <property type="match status" value="1"/>
</dbReference>
<dbReference type="Gene3D" id="3.40.1190.20">
    <property type="match status" value="1"/>
</dbReference>
<dbReference type="Gene3D" id="3.40.50.620">
    <property type="entry name" value="HUPs"/>
    <property type="match status" value="1"/>
</dbReference>
<dbReference type="HAMAP" id="MF_01603">
    <property type="entry name" value="HldE"/>
    <property type="match status" value="1"/>
</dbReference>
<dbReference type="InterPro" id="IPR023030">
    <property type="entry name" value="Bifunc_HldE"/>
</dbReference>
<dbReference type="InterPro" id="IPR004821">
    <property type="entry name" value="Cyt_trans-like"/>
</dbReference>
<dbReference type="InterPro" id="IPR011611">
    <property type="entry name" value="PfkB_dom"/>
</dbReference>
<dbReference type="InterPro" id="IPR011913">
    <property type="entry name" value="RfaE_dom_I"/>
</dbReference>
<dbReference type="InterPro" id="IPR011914">
    <property type="entry name" value="RfaE_dom_II"/>
</dbReference>
<dbReference type="InterPro" id="IPR029056">
    <property type="entry name" value="Ribokinase-like"/>
</dbReference>
<dbReference type="InterPro" id="IPR014729">
    <property type="entry name" value="Rossmann-like_a/b/a_fold"/>
</dbReference>
<dbReference type="NCBIfam" id="TIGR00125">
    <property type="entry name" value="cyt_tran_rel"/>
    <property type="match status" value="1"/>
</dbReference>
<dbReference type="NCBIfam" id="NF008454">
    <property type="entry name" value="PRK11316.1"/>
    <property type="match status" value="1"/>
</dbReference>
<dbReference type="NCBIfam" id="TIGR02198">
    <property type="entry name" value="rfaE_dom_I"/>
    <property type="match status" value="1"/>
</dbReference>
<dbReference type="NCBIfam" id="TIGR02199">
    <property type="entry name" value="rfaE_dom_II"/>
    <property type="match status" value="1"/>
</dbReference>
<dbReference type="PANTHER" id="PTHR46969">
    <property type="entry name" value="BIFUNCTIONAL PROTEIN HLDE"/>
    <property type="match status" value="1"/>
</dbReference>
<dbReference type="PANTHER" id="PTHR46969:SF1">
    <property type="entry name" value="BIFUNCTIONAL PROTEIN HLDE"/>
    <property type="match status" value="1"/>
</dbReference>
<dbReference type="Pfam" id="PF01467">
    <property type="entry name" value="CTP_transf_like"/>
    <property type="match status" value="1"/>
</dbReference>
<dbReference type="Pfam" id="PF00294">
    <property type="entry name" value="PfkB"/>
    <property type="match status" value="1"/>
</dbReference>
<dbReference type="SUPFAM" id="SSF52374">
    <property type="entry name" value="Nucleotidylyl transferase"/>
    <property type="match status" value="1"/>
</dbReference>
<dbReference type="SUPFAM" id="SSF53613">
    <property type="entry name" value="Ribokinase-like"/>
    <property type="match status" value="1"/>
</dbReference>
<accession>Q9CME6</accession>